<name>NSP6_ROTPY</name>
<comment type="subunit">
    <text evidence="1 2">Interacts with NSP2 and NSP5.</text>
</comment>
<comment type="subcellular location">
    <subcellularLocation>
        <location evidence="1 2">Host cytoplasm</location>
    </subcellularLocation>
    <subcellularLocation>
        <location evidence="1">Host mitochondrion</location>
    </subcellularLocation>
    <text evidence="1">Found in spherical cytoplasmic structures, called viral factories, that appear early after infection and are the site of viral replication and packaging.</text>
</comment>
<comment type="similarity">
    <text evidence="1">Belongs to the rotavirus A NSP6 family.</text>
</comment>
<protein>
    <recommendedName>
        <fullName>Non-structural protein 6</fullName>
        <shortName>NSP6</shortName>
    </recommendedName>
</protein>
<evidence type="ECO:0000255" key="1">
    <source>
        <dbReference type="HAMAP-Rule" id="MF_04093"/>
    </source>
</evidence>
<evidence type="ECO:0000269" key="2">
    <source>
    </source>
</evidence>
<sequence>MNRLLQRQLFLENLLVGVNSTFHQMQKHSINTCCRSLQRILDHLILLQTIHSPVFRLDRMQLRQMQTLACLWIHRRNHDLQVTLGAIKWISP</sequence>
<organism>
    <name type="scientific">Rotavirus A (strain RVA/Pig/Mexico/YM/1983/G11P9[7])</name>
    <name type="common">RV-A</name>
    <dbReference type="NCBI Taxonomy" id="10919"/>
    <lineage>
        <taxon>Viruses</taxon>
        <taxon>Riboviria</taxon>
        <taxon>Orthornavirae</taxon>
        <taxon>Duplornaviricota</taxon>
        <taxon>Resentoviricetes</taxon>
        <taxon>Reovirales</taxon>
        <taxon>Sedoreoviridae</taxon>
        <taxon>Rotavirus</taxon>
        <taxon>Rotavirus A</taxon>
    </lineage>
</organism>
<organismHost>
    <name type="scientific">Sus scrofa</name>
    <name type="common">Pig</name>
    <dbReference type="NCBI Taxonomy" id="9823"/>
</organismHost>
<feature type="chain" id="PRO_0000149645" description="Non-structural protein 6">
    <location>
        <begin position="1"/>
        <end position="92"/>
    </location>
</feature>
<keyword id="KW-1035">Host cytoplasm</keyword>
<keyword id="KW-1045">Host mitochondrion</keyword>
<accession>Q03056</accession>
<proteinExistence type="evidence at protein level"/>
<reference key="1">
    <citation type="journal article" date="1993" name="Nucleic Acids Res.">
        <title>Protein NS26 is highly conserved among porcine rotavirus strains.</title>
        <authorList>
            <person name="Lopez S."/>
            <person name="Arias C.F."/>
        </authorList>
    </citation>
    <scope>NUCLEOTIDE SEQUENCE [GENOMIC RNA]</scope>
</reference>
<reference key="2">
    <citation type="journal article" date="2000" name="J. Gen. Virol.">
        <title>The C-terminal domain of rotavirus NSP5 is essential for its multimerization, hyperphosphorylation and interaction with NSP6.</title>
        <authorList>
            <person name="Torres-Vega M.A."/>
            <person name="Gonzalez R.A."/>
            <person name="Duarte M."/>
            <person name="Poncet D."/>
            <person name="Lopez S."/>
            <person name="Arias C.F."/>
        </authorList>
    </citation>
    <scope>INTERACTION WITH NSP5</scope>
    <scope>SUBCELLULAR LOCATION</scope>
</reference>
<dbReference type="EMBL" id="X69486">
    <property type="protein sequence ID" value="CAA49242.1"/>
    <property type="molecule type" value="Genomic_RNA"/>
</dbReference>
<dbReference type="GO" id="GO:0033650">
    <property type="term" value="C:host cell mitochondrion"/>
    <property type="evidence" value="ECO:0007669"/>
    <property type="project" value="UniProtKB-SubCell"/>
</dbReference>
<dbReference type="HAMAP" id="MF_04093">
    <property type="entry name" value="ROTA_NSP6"/>
    <property type="match status" value="1"/>
</dbReference>
<dbReference type="InterPro" id="IPR006950">
    <property type="entry name" value="Rotavirus_NSP6"/>
</dbReference>
<dbReference type="Pfam" id="PF04866">
    <property type="entry name" value="Rota_NS6"/>
    <property type="match status" value="1"/>
</dbReference>